<feature type="chain" id="PRO_0000306750" description="Small ribosomal subunit protein uS13">
    <location>
        <begin position="1"/>
        <end position="173"/>
    </location>
</feature>
<feature type="region of interest" description="Disordered" evidence="2">
    <location>
        <begin position="130"/>
        <end position="155"/>
    </location>
</feature>
<feature type="compositionally biased region" description="Basic residues" evidence="2">
    <location>
        <begin position="130"/>
        <end position="143"/>
    </location>
</feature>
<sequence length="173" mass="19473">MSTNNTQDDAAEEEDDDLQYFVRIGTTDLDGTKAVERSLTDMKGIGKRTARIITDVASVDRHATFGLLEEDEIDSITDAVENLDDHIPGWMTNRREDFFSGDTDHKTGADLEEKRRHDVNRMKMIDSYKGVRHKRGQKVRGQRTKSTGRTEGTIGVNVEAIKEEAAEAAEEEE</sequence>
<gene>
    <name evidence="1" type="primary">rps13</name>
    <name type="ordered locus">HQ_2944A</name>
</gene>
<comment type="function">
    <text evidence="1">Located at the top of the head of the 30S subunit, it contacts several helices of the 16S rRNA. In the 70S ribosome it contacts the 23S rRNA (bridge B1a) and protein L5 of the 50S subunit (bridge B1b), connecting the 2 subunits; these bridges are implicated in subunit movement.</text>
</comment>
<comment type="subunit">
    <text evidence="1">Part of the 30S ribosomal subunit. Forms a loose heterodimer with protein S19. Forms two bridges to the 50S subunit in the 70S ribosome.</text>
</comment>
<comment type="similarity">
    <text evidence="1">Belongs to the universal ribosomal protein uS13 family.</text>
</comment>
<organism>
    <name type="scientific">Haloquadratum walsbyi (strain DSM 16790 / HBSQ001)</name>
    <dbReference type="NCBI Taxonomy" id="362976"/>
    <lineage>
        <taxon>Archaea</taxon>
        <taxon>Methanobacteriati</taxon>
        <taxon>Methanobacteriota</taxon>
        <taxon>Stenosarchaea group</taxon>
        <taxon>Halobacteria</taxon>
        <taxon>Halobacteriales</taxon>
        <taxon>Haloferacaceae</taxon>
        <taxon>Haloquadratum</taxon>
    </lineage>
</organism>
<keyword id="KW-1185">Reference proteome</keyword>
<keyword id="KW-0687">Ribonucleoprotein</keyword>
<keyword id="KW-0689">Ribosomal protein</keyword>
<keyword id="KW-0694">RNA-binding</keyword>
<keyword id="KW-0699">rRNA-binding</keyword>
<protein>
    <recommendedName>
        <fullName evidence="1">Small ribosomal subunit protein uS13</fullName>
    </recommendedName>
    <alternativeName>
        <fullName evidence="3">30S ribosomal protein S13</fullName>
    </alternativeName>
</protein>
<dbReference type="EMBL" id="AM180088">
    <property type="protein sequence ID" value="CAJ53048.1"/>
    <property type="molecule type" value="Genomic_DNA"/>
</dbReference>
<dbReference type="RefSeq" id="WP_011572158.1">
    <property type="nucleotide sequence ID" value="NC_008212.1"/>
</dbReference>
<dbReference type="SMR" id="Q18G53"/>
<dbReference type="STRING" id="362976.HQ_2944A"/>
<dbReference type="GeneID" id="4194649"/>
<dbReference type="KEGG" id="hwa:HQ_2944A"/>
<dbReference type="eggNOG" id="arCOG01722">
    <property type="taxonomic scope" value="Archaea"/>
</dbReference>
<dbReference type="HOGENOM" id="CLU_103849_0_0_2"/>
<dbReference type="Proteomes" id="UP000001975">
    <property type="component" value="Chromosome"/>
</dbReference>
<dbReference type="GO" id="GO:0005829">
    <property type="term" value="C:cytosol"/>
    <property type="evidence" value="ECO:0007669"/>
    <property type="project" value="TreeGrafter"/>
</dbReference>
<dbReference type="GO" id="GO:0015935">
    <property type="term" value="C:small ribosomal subunit"/>
    <property type="evidence" value="ECO:0007669"/>
    <property type="project" value="TreeGrafter"/>
</dbReference>
<dbReference type="GO" id="GO:0019843">
    <property type="term" value="F:rRNA binding"/>
    <property type="evidence" value="ECO:0007669"/>
    <property type="project" value="UniProtKB-UniRule"/>
</dbReference>
<dbReference type="GO" id="GO:0003735">
    <property type="term" value="F:structural constituent of ribosome"/>
    <property type="evidence" value="ECO:0007669"/>
    <property type="project" value="InterPro"/>
</dbReference>
<dbReference type="GO" id="GO:0006412">
    <property type="term" value="P:translation"/>
    <property type="evidence" value="ECO:0007669"/>
    <property type="project" value="UniProtKB-UniRule"/>
</dbReference>
<dbReference type="Gene3D" id="1.10.8.50">
    <property type="match status" value="1"/>
</dbReference>
<dbReference type="Gene3D" id="4.10.910.10">
    <property type="entry name" value="30s ribosomal protein s13, domain 2"/>
    <property type="match status" value="1"/>
</dbReference>
<dbReference type="HAMAP" id="MF_01315">
    <property type="entry name" value="Ribosomal_uS13"/>
    <property type="match status" value="1"/>
</dbReference>
<dbReference type="InterPro" id="IPR027437">
    <property type="entry name" value="Rbsml_uS13_C"/>
</dbReference>
<dbReference type="InterPro" id="IPR001892">
    <property type="entry name" value="Ribosomal_uS13"/>
</dbReference>
<dbReference type="InterPro" id="IPR010979">
    <property type="entry name" value="Ribosomal_uS13-like_H2TH"/>
</dbReference>
<dbReference type="InterPro" id="IPR019977">
    <property type="entry name" value="Ribosomal_uS13_archaeal"/>
</dbReference>
<dbReference type="InterPro" id="IPR018269">
    <property type="entry name" value="Ribosomal_uS13_CS"/>
</dbReference>
<dbReference type="NCBIfam" id="NF003140">
    <property type="entry name" value="PRK04053.1"/>
    <property type="match status" value="1"/>
</dbReference>
<dbReference type="NCBIfam" id="TIGR03629">
    <property type="entry name" value="uS13_arch"/>
    <property type="match status" value="1"/>
</dbReference>
<dbReference type="PANTHER" id="PTHR10871">
    <property type="entry name" value="30S RIBOSOMAL PROTEIN S13/40S RIBOSOMAL PROTEIN S18"/>
    <property type="match status" value="1"/>
</dbReference>
<dbReference type="PANTHER" id="PTHR10871:SF3">
    <property type="entry name" value="SMALL RIBOSOMAL SUBUNIT PROTEIN US13"/>
    <property type="match status" value="1"/>
</dbReference>
<dbReference type="Pfam" id="PF00416">
    <property type="entry name" value="Ribosomal_S13"/>
    <property type="match status" value="1"/>
</dbReference>
<dbReference type="PIRSF" id="PIRSF002134">
    <property type="entry name" value="Ribosomal_S13"/>
    <property type="match status" value="1"/>
</dbReference>
<dbReference type="SUPFAM" id="SSF46946">
    <property type="entry name" value="S13-like H2TH domain"/>
    <property type="match status" value="1"/>
</dbReference>
<dbReference type="PROSITE" id="PS00646">
    <property type="entry name" value="RIBOSOMAL_S13_1"/>
    <property type="match status" value="1"/>
</dbReference>
<dbReference type="PROSITE" id="PS50159">
    <property type="entry name" value="RIBOSOMAL_S13_2"/>
    <property type="match status" value="1"/>
</dbReference>
<proteinExistence type="inferred from homology"/>
<reference key="1">
    <citation type="journal article" date="2006" name="BMC Genomics">
        <title>The genome of the square archaeon Haloquadratum walsbyi: life at the limits of water activity.</title>
        <authorList>
            <person name="Bolhuis H."/>
            <person name="Palm P."/>
            <person name="Wende A."/>
            <person name="Falb M."/>
            <person name="Rampp M."/>
            <person name="Rodriguez-Valera F."/>
            <person name="Pfeiffer F."/>
            <person name="Oesterhelt D."/>
        </authorList>
    </citation>
    <scope>NUCLEOTIDE SEQUENCE [LARGE SCALE GENOMIC DNA]</scope>
    <source>
        <strain>DSM 16790 / HBSQ001</strain>
    </source>
</reference>
<evidence type="ECO:0000255" key="1">
    <source>
        <dbReference type="HAMAP-Rule" id="MF_01315"/>
    </source>
</evidence>
<evidence type="ECO:0000256" key="2">
    <source>
        <dbReference type="SAM" id="MobiDB-lite"/>
    </source>
</evidence>
<evidence type="ECO:0000305" key="3"/>
<accession>Q18G53</accession>
<name>RS13_HALWD</name>